<protein>
    <recommendedName>
        <fullName>Sensory rhodopsin-1</fullName>
    </recommendedName>
    <alternativeName>
        <fullName>Sensory rhodopsin I</fullName>
        <shortName>SR-I</shortName>
    </alternativeName>
</protein>
<comment type="function">
    <text evidence="1">Involved in the control of phototaxis. Mediates both photoattractant (in the orange light) and photophobic (in the near UV light) responses. The signal is then transmitted to the sensory rhodopsin I transducer (HTR-I) (By similarity).</text>
</comment>
<comment type="subunit">
    <text evidence="1">Interacts with HTR-I.</text>
</comment>
<comment type="subcellular location">
    <subcellularLocation>
        <location evidence="1">Cell membrane</location>
        <topology evidence="1">Multi-pass membrane protein</topology>
    </subcellularLocation>
</comment>
<comment type="similarity">
    <text evidence="2">Belongs to the archaeal/bacterial/fungal opsin family.</text>
</comment>
<organism>
    <name type="scientific">Halobacterium sp. (strain SG1)</name>
    <dbReference type="NCBI Taxonomy" id="33006"/>
    <lineage>
        <taxon>Archaea</taxon>
        <taxon>Methanobacteriati</taxon>
        <taxon>Methanobacteriota</taxon>
        <taxon>Stenosarchaea group</taxon>
        <taxon>Halobacteria</taxon>
        <taxon>Halobacteriales</taxon>
        <taxon>Halobacteriaceae</taxon>
        <taxon>Halobacterium</taxon>
    </lineage>
</organism>
<gene>
    <name type="primary">sop1</name>
    <name type="synonym">sopI</name>
</gene>
<sequence>MTGAVSAAYWIAAVAFLVGLGITAALYAKLGESEDRGRLAALAVIPGFAGLAYAGMALGIGTVTVNGAELVGLRYVDWIVTTPLLVGFIGYVAGASRRAIAGVMLADALMIAFGAGAVVTGGTLKWVLFGVSSIFHVTLFAYLYVVFPRAVPDDPMQRGLFSLLKNHVGLLWLAYPFVWLMGPAGIGFTTGVGAALTYAFLDVLAKVPYVYFFYARRQAFTDVVSAATADREDATDAVGDGAPTAAD</sequence>
<dbReference type="EMBL" id="X70290">
    <property type="protein sequence ID" value="CAA49771.1"/>
    <property type="molecule type" value="Genomic_DNA"/>
</dbReference>
<dbReference type="PIR" id="S78782">
    <property type="entry name" value="S29989"/>
</dbReference>
<dbReference type="SMR" id="P33743"/>
<dbReference type="GO" id="GO:0005886">
    <property type="term" value="C:plasma membrane"/>
    <property type="evidence" value="ECO:0007669"/>
    <property type="project" value="UniProtKB-SubCell"/>
</dbReference>
<dbReference type="GO" id="GO:0005216">
    <property type="term" value="F:monoatomic ion channel activity"/>
    <property type="evidence" value="ECO:0007669"/>
    <property type="project" value="InterPro"/>
</dbReference>
<dbReference type="GO" id="GO:0009881">
    <property type="term" value="F:photoreceptor activity"/>
    <property type="evidence" value="ECO:0007669"/>
    <property type="project" value="UniProtKB-KW"/>
</dbReference>
<dbReference type="GO" id="GO:0007602">
    <property type="term" value="P:phototransduction"/>
    <property type="evidence" value="ECO:0007669"/>
    <property type="project" value="UniProtKB-KW"/>
</dbReference>
<dbReference type="CDD" id="cd15029">
    <property type="entry name" value="7tm_SRI_SRII"/>
    <property type="match status" value="1"/>
</dbReference>
<dbReference type="Gene3D" id="1.20.1070.10">
    <property type="entry name" value="Rhodopsin 7-helix transmembrane proteins"/>
    <property type="match status" value="1"/>
</dbReference>
<dbReference type="InterPro" id="IPR001425">
    <property type="entry name" value="Arc/bac/fun_rhodopsins"/>
</dbReference>
<dbReference type="InterPro" id="IPR018229">
    <property type="entry name" value="Rhodopsin_retinal_BS"/>
</dbReference>
<dbReference type="PANTHER" id="PTHR28286">
    <property type="match status" value="1"/>
</dbReference>
<dbReference type="PANTHER" id="PTHR28286:SF2">
    <property type="entry name" value="BACTERIORHODOPSIN _OPSIN, NOPA (EUROFUNG)"/>
    <property type="match status" value="1"/>
</dbReference>
<dbReference type="Pfam" id="PF01036">
    <property type="entry name" value="Bac_rhodopsin"/>
    <property type="match status" value="1"/>
</dbReference>
<dbReference type="PRINTS" id="PR00251">
    <property type="entry name" value="BACTRLOPSIN"/>
</dbReference>
<dbReference type="SMART" id="SM01021">
    <property type="entry name" value="Bac_rhodopsin"/>
    <property type="match status" value="1"/>
</dbReference>
<dbReference type="SUPFAM" id="SSF81321">
    <property type="entry name" value="Family A G protein-coupled receptor-like"/>
    <property type="match status" value="1"/>
</dbReference>
<dbReference type="PROSITE" id="PS00950">
    <property type="entry name" value="BACTERIAL_OPSIN_1"/>
    <property type="match status" value="1"/>
</dbReference>
<dbReference type="PROSITE" id="PS00327">
    <property type="entry name" value="BACTERIAL_OPSIN_RET"/>
    <property type="match status" value="1"/>
</dbReference>
<proteinExistence type="evidence at protein level"/>
<reference key="1">
    <citation type="journal article" date="1993" name="J. Bacteriol.">
        <title>Bacterioopsin, haloopsin, and sensory opsin I of the halobacterial isolate Halobacterium sp. strain SG1: three new members of a growing family.</title>
        <authorList>
            <person name="Soppa J."/>
            <person name="Duschl J."/>
            <person name="Oesterhelt D."/>
        </authorList>
    </citation>
    <scope>NUCLEOTIDE SEQUENCE [GENOMIC DNA]</scope>
</reference>
<accession>P33743</accession>
<keyword id="KW-1003">Cell membrane</keyword>
<keyword id="KW-0157">Chromophore</keyword>
<keyword id="KW-0472">Membrane</keyword>
<keyword id="KW-0600">Photoreceptor protein</keyword>
<keyword id="KW-0675">Receptor</keyword>
<keyword id="KW-0681">Retinal protein</keyword>
<keyword id="KW-0716">Sensory transduction</keyword>
<keyword id="KW-0812">Transmembrane</keyword>
<keyword id="KW-1133">Transmembrane helix</keyword>
<evidence type="ECO:0000250" key="1"/>
<evidence type="ECO:0000305" key="2"/>
<feature type="chain" id="PRO_0000196277" description="Sensory rhodopsin-1">
    <location>
        <begin position="1"/>
        <end position="247"/>
    </location>
</feature>
<feature type="topological domain" description="Extracellular" evidence="1">
    <location>
        <begin position="1"/>
        <end position="4"/>
    </location>
</feature>
<feature type="transmembrane region" description="Helical; Name=Helix A" evidence="1">
    <location>
        <begin position="5"/>
        <end position="26"/>
    </location>
</feature>
<feature type="topological domain" description="Cytoplasmic" evidence="1">
    <location>
        <begin position="27"/>
        <end position="35"/>
    </location>
</feature>
<feature type="transmembrane region" description="Helical; Name=Helix B" evidence="1">
    <location>
        <begin position="36"/>
        <end position="57"/>
    </location>
</feature>
<feature type="topological domain" description="Extracellular" evidence="1">
    <location>
        <begin position="58"/>
        <end position="71"/>
    </location>
</feature>
<feature type="transmembrane region" description="Helical; Name=Helix C" evidence="1">
    <location>
        <begin position="72"/>
        <end position="93"/>
    </location>
</feature>
<feature type="topological domain" description="Cytoplasmic" evidence="1">
    <location>
        <begin position="94"/>
        <end position="96"/>
    </location>
</feature>
<feature type="transmembrane region" description="Helical; Name=Helix D" evidence="1">
    <location>
        <begin position="97"/>
        <end position="119"/>
    </location>
</feature>
<feature type="topological domain" description="Extracellular" evidence="1">
    <location>
        <begin position="120"/>
        <end position="123"/>
    </location>
</feature>
<feature type="transmembrane region" description="Helical; Name=Helix E" evidence="1">
    <location>
        <begin position="124"/>
        <end position="151"/>
    </location>
</feature>
<feature type="topological domain" description="Cytoplasmic" evidence="1">
    <location>
        <begin position="152"/>
        <end position="154"/>
    </location>
</feature>
<feature type="transmembrane region" description="Helical; Name=Helix F" evidence="1">
    <location>
        <begin position="155"/>
        <end position="182"/>
    </location>
</feature>
<feature type="topological domain" description="Extracellular" evidence="1">
    <location>
        <begin position="183"/>
        <end position="190"/>
    </location>
</feature>
<feature type="transmembrane region" description="Helical; Name=Helix G" evidence="1">
    <location>
        <begin position="191"/>
        <end position="223"/>
    </location>
</feature>
<feature type="topological domain" description="Cytoplasmic" evidence="1">
    <location>
        <begin position="224"/>
        <end position="247"/>
    </location>
</feature>
<feature type="modified residue" description="N6-(retinylidene)lysine">
    <location>
        <position position="206"/>
    </location>
</feature>
<name>BACS1_HALSS</name>